<reference key="1">
    <citation type="journal article" date="2004" name="Proc. Natl. Acad. Sci. U.S.A.">
        <title>Genome sequence of the enterobacterial phytopathogen Erwinia carotovora subsp. atroseptica and characterization of virulence factors.</title>
        <authorList>
            <person name="Bell K.S."/>
            <person name="Sebaihia M."/>
            <person name="Pritchard L."/>
            <person name="Holden M.T.G."/>
            <person name="Hyman L.J."/>
            <person name="Holeva M.C."/>
            <person name="Thomson N.R."/>
            <person name="Bentley S.D."/>
            <person name="Churcher L.J.C."/>
            <person name="Mungall K."/>
            <person name="Atkin R."/>
            <person name="Bason N."/>
            <person name="Brooks K."/>
            <person name="Chillingworth T."/>
            <person name="Clark K."/>
            <person name="Doggett J."/>
            <person name="Fraser A."/>
            <person name="Hance Z."/>
            <person name="Hauser H."/>
            <person name="Jagels K."/>
            <person name="Moule S."/>
            <person name="Norbertczak H."/>
            <person name="Ormond D."/>
            <person name="Price C."/>
            <person name="Quail M.A."/>
            <person name="Sanders M."/>
            <person name="Walker D."/>
            <person name="Whitehead S."/>
            <person name="Salmond G.P.C."/>
            <person name="Birch P.R.J."/>
            <person name="Parkhill J."/>
            <person name="Toth I.K."/>
        </authorList>
    </citation>
    <scope>NUCLEOTIDE SEQUENCE [LARGE SCALE GENOMIC DNA]</scope>
    <source>
        <strain>SCRI 1043 / ATCC BAA-672</strain>
    </source>
</reference>
<organism>
    <name type="scientific">Pectobacterium atrosepticum (strain SCRI 1043 / ATCC BAA-672)</name>
    <name type="common">Erwinia carotovora subsp. atroseptica</name>
    <dbReference type="NCBI Taxonomy" id="218491"/>
    <lineage>
        <taxon>Bacteria</taxon>
        <taxon>Pseudomonadati</taxon>
        <taxon>Pseudomonadota</taxon>
        <taxon>Gammaproteobacteria</taxon>
        <taxon>Enterobacterales</taxon>
        <taxon>Pectobacteriaceae</taxon>
        <taxon>Pectobacterium</taxon>
    </lineage>
</organism>
<evidence type="ECO:0000255" key="1">
    <source>
        <dbReference type="HAMAP-Rule" id="MF_00358"/>
    </source>
</evidence>
<evidence type="ECO:0000256" key="2">
    <source>
        <dbReference type="SAM" id="MobiDB-lite"/>
    </source>
</evidence>
<evidence type="ECO:0000305" key="3"/>
<comment type="similarity">
    <text evidence="1">Belongs to the bacterial ribosomal protein bS21 family.</text>
</comment>
<proteinExistence type="inferred from homology"/>
<feature type="chain" id="PRO_0000178336" description="Small ribosomal subunit protein bS21">
    <location>
        <begin position="1"/>
        <end position="71"/>
    </location>
</feature>
<feature type="region of interest" description="Disordered" evidence="2">
    <location>
        <begin position="43"/>
        <end position="71"/>
    </location>
</feature>
<feature type="compositionally biased region" description="Basic residues" evidence="2">
    <location>
        <begin position="46"/>
        <end position="59"/>
    </location>
</feature>
<feature type="compositionally biased region" description="Basic and acidic residues" evidence="2">
    <location>
        <begin position="60"/>
        <end position="71"/>
    </location>
</feature>
<dbReference type="EMBL" id="BX950851">
    <property type="protein sequence ID" value="CAG73596.1"/>
    <property type="molecule type" value="Genomic_DNA"/>
</dbReference>
<dbReference type="RefSeq" id="WP_001144069.1">
    <property type="nucleotide sequence ID" value="NC_004547.2"/>
</dbReference>
<dbReference type="SMR" id="Q6D9D4"/>
<dbReference type="STRING" id="218491.ECA0682"/>
<dbReference type="GeneID" id="98390195"/>
<dbReference type="KEGG" id="eca:ECA0682"/>
<dbReference type="eggNOG" id="COG0828">
    <property type="taxonomic scope" value="Bacteria"/>
</dbReference>
<dbReference type="HOGENOM" id="CLU_159258_1_0_6"/>
<dbReference type="OrthoDB" id="9799244at2"/>
<dbReference type="Proteomes" id="UP000007966">
    <property type="component" value="Chromosome"/>
</dbReference>
<dbReference type="GO" id="GO:1990904">
    <property type="term" value="C:ribonucleoprotein complex"/>
    <property type="evidence" value="ECO:0007669"/>
    <property type="project" value="UniProtKB-KW"/>
</dbReference>
<dbReference type="GO" id="GO:0005840">
    <property type="term" value="C:ribosome"/>
    <property type="evidence" value="ECO:0007669"/>
    <property type="project" value="UniProtKB-KW"/>
</dbReference>
<dbReference type="GO" id="GO:0003735">
    <property type="term" value="F:structural constituent of ribosome"/>
    <property type="evidence" value="ECO:0007669"/>
    <property type="project" value="InterPro"/>
</dbReference>
<dbReference type="GO" id="GO:0006412">
    <property type="term" value="P:translation"/>
    <property type="evidence" value="ECO:0007669"/>
    <property type="project" value="UniProtKB-UniRule"/>
</dbReference>
<dbReference type="FunFam" id="1.20.5.1150:FF:000001">
    <property type="entry name" value="30S ribosomal protein S21"/>
    <property type="match status" value="1"/>
</dbReference>
<dbReference type="Gene3D" id="1.20.5.1150">
    <property type="entry name" value="Ribosomal protein S8"/>
    <property type="match status" value="1"/>
</dbReference>
<dbReference type="HAMAP" id="MF_00358">
    <property type="entry name" value="Ribosomal_bS21"/>
    <property type="match status" value="1"/>
</dbReference>
<dbReference type="InterPro" id="IPR001911">
    <property type="entry name" value="Ribosomal_bS21"/>
</dbReference>
<dbReference type="InterPro" id="IPR018278">
    <property type="entry name" value="Ribosomal_bS21_CS"/>
</dbReference>
<dbReference type="InterPro" id="IPR038380">
    <property type="entry name" value="Ribosomal_bS21_sf"/>
</dbReference>
<dbReference type="NCBIfam" id="TIGR00030">
    <property type="entry name" value="S21p"/>
    <property type="match status" value="1"/>
</dbReference>
<dbReference type="PANTHER" id="PTHR21109">
    <property type="entry name" value="MITOCHONDRIAL 28S RIBOSOMAL PROTEIN S21"/>
    <property type="match status" value="1"/>
</dbReference>
<dbReference type="PANTHER" id="PTHR21109:SF22">
    <property type="entry name" value="SMALL RIBOSOMAL SUBUNIT PROTEIN BS21"/>
    <property type="match status" value="1"/>
</dbReference>
<dbReference type="Pfam" id="PF01165">
    <property type="entry name" value="Ribosomal_S21"/>
    <property type="match status" value="1"/>
</dbReference>
<dbReference type="PRINTS" id="PR00976">
    <property type="entry name" value="RIBOSOMALS21"/>
</dbReference>
<dbReference type="PROSITE" id="PS01181">
    <property type="entry name" value="RIBOSOMAL_S21"/>
    <property type="match status" value="1"/>
</dbReference>
<accession>Q6D9D4</accession>
<sequence>MPVIKVRENEPFDVALRRFKRSCEKAGVLAEVRRREFYEKPTTERKRAKASAVKRHAKKLARENARRTRLY</sequence>
<keyword id="KW-1185">Reference proteome</keyword>
<keyword id="KW-0687">Ribonucleoprotein</keyword>
<keyword id="KW-0689">Ribosomal protein</keyword>
<name>RS21_PECAS</name>
<protein>
    <recommendedName>
        <fullName evidence="1">Small ribosomal subunit protein bS21</fullName>
    </recommendedName>
    <alternativeName>
        <fullName evidence="3">30S ribosomal protein S21</fullName>
    </alternativeName>
</protein>
<gene>
    <name evidence="1" type="primary">rpsU</name>
    <name type="ordered locus">ECA0682</name>
</gene>